<comment type="function">
    <text evidence="1">Catalyzes the attachment of serine to tRNA(Ser). Is also able to aminoacylate tRNA(Sec) with serine, to form the misacylated tRNA L-seryl-tRNA(Sec), which will be further converted into selenocysteinyl-tRNA(Sec).</text>
</comment>
<comment type="catalytic activity">
    <reaction evidence="1">
        <text>tRNA(Ser) + L-serine + ATP = L-seryl-tRNA(Ser) + AMP + diphosphate + H(+)</text>
        <dbReference type="Rhea" id="RHEA:12292"/>
        <dbReference type="Rhea" id="RHEA-COMP:9669"/>
        <dbReference type="Rhea" id="RHEA-COMP:9703"/>
        <dbReference type="ChEBI" id="CHEBI:15378"/>
        <dbReference type="ChEBI" id="CHEBI:30616"/>
        <dbReference type="ChEBI" id="CHEBI:33019"/>
        <dbReference type="ChEBI" id="CHEBI:33384"/>
        <dbReference type="ChEBI" id="CHEBI:78442"/>
        <dbReference type="ChEBI" id="CHEBI:78533"/>
        <dbReference type="ChEBI" id="CHEBI:456215"/>
        <dbReference type="EC" id="6.1.1.11"/>
    </reaction>
</comment>
<comment type="catalytic activity">
    <reaction evidence="1">
        <text>tRNA(Sec) + L-serine + ATP = L-seryl-tRNA(Sec) + AMP + diphosphate + H(+)</text>
        <dbReference type="Rhea" id="RHEA:42580"/>
        <dbReference type="Rhea" id="RHEA-COMP:9742"/>
        <dbReference type="Rhea" id="RHEA-COMP:10128"/>
        <dbReference type="ChEBI" id="CHEBI:15378"/>
        <dbReference type="ChEBI" id="CHEBI:30616"/>
        <dbReference type="ChEBI" id="CHEBI:33019"/>
        <dbReference type="ChEBI" id="CHEBI:33384"/>
        <dbReference type="ChEBI" id="CHEBI:78442"/>
        <dbReference type="ChEBI" id="CHEBI:78533"/>
        <dbReference type="ChEBI" id="CHEBI:456215"/>
        <dbReference type="EC" id="6.1.1.11"/>
    </reaction>
</comment>
<comment type="pathway">
    <text evidence="1">Aminoacyl-tRNA biosynthesis; selenocysteinyl-tRNA(Sec) biosynthesis; L-seryl-tRNA(Sec) from L-serine and tRNA(Sec): step 1/1.</text>
</comment>
<comment type="subunit">
    <text evidence="1">Homodimer. The tRNA molecule binds across the dimer.</text>
</comment>
<comment type="subcellular location">
    <subcellularLocation>
        <location evidence="1">Cytoplasm</location>
    </subcellularLocation>
</comment>
<comment type="domain">
    <text evidence="1">Consists of two distinct domains, a catalytic core and a N-terminal extension that is involved in tRNA binding.</text>
</comment>
<comment type="similarity">
    <text evidence="1">Belongs to the class-II aminoacyl-tRNA synthetase family. Type-1 seryl-tRNA synthetase subfamily.</text>
</comment>
<feature type="chain" id="PRO_1000058351" description="Serine--tRNA ligase">
    <location>
        <begin position="1"/>
        <end position="430"/>
    </location>
</feature>
<feature type="binding site" evidence="1">
    <location>
        <begin position="237"/>
        <end position="239"/>
    </location>
    <ligand>
        <name>L-serine</name>
        <dbReference type="ChEBI" id="CHEBI:33384"/>
    </ligand>
</feature>
<feature type="binding site" evidence="1">
    <location>
        <begin position="268"/>
        <end position="270"/>
    </location>
    <ligand>
        <name>ATP</name>
        <dbReference type="ChEBI" id="CHEBI:30616"/>
    </ligand>
</feature>
<feature type="binding site" evidence="1">
    <location>
        <position position="291"/>
    </location>
    <ligand>
        <name>L-serine</name>
        <dbReference type="ChEBI" id="CHEBI:33384"/>
    </ligand>
</feature>
<feature type="binding site" evidence="1">
    <location>
        <begin position="355"/>
        <end position="358"/>
    </location>
    <ligand>
        <name>ATP</name>
        <dbReference type="ChEBI" id="CHEBI:30616"/>
    </ligand>
</feature>
<feature type="binding site" evidence="1">
    <location>
        <position position="391"/>
    </location>
    <ligand>
        <name>L-serine</name>
        <dbReference type="ChEBI" id="CHEBI:33384"/>
    </ligand>
</feature>
<sequence>MLDPNLLRNEPDAVAEKLARRGFKLDVDKLGALEERRKVLQVKTENLQAERNSRSKSIGQAKARGEDIEPLRLEVNKLGEELDAAKAELDALQAEIRDIALTIPNLPADEVPVGKDENDNVEVSRWGTPREFDFEVRDHVTLGEMHSGLDFAAAVKLTGSRFVVMKGQIARMHRALSQFMLDLHTEQHGYSENYVPYLVNQDTLYGTGQLPKFAGDLFHTRPLEEEADTSNYALIPTAEVPLTNLVRGEIIDEDDLPIKMTAHTPCFRSEAGSYGRDTRGLIRMHQFDKVEMVQIVRPEDSMAALEEMTGHAEKVLQLLGLPYRKIILCTGDMGFGACKTYDLEVWIPAQNTYREISSCSNVWDFQARRMQARCRSKSDKKTRLVHTLNGSGLAVGRTLVAVMENYQQADGRIEVPEVLRPYMNGLEYIG</sequence>
<name>SYS_ECO24</name>
<evidence type="ECO:0000255" key="1">
    <source>
        <dbReference type="HAMAP-Rule" id="MF_00176"/>
    </source>
</evidence>
<organism>
    <name type="scientific">Escherichia coli O139:H28 (strain E24377A / ETEC)</name>
    <dbReference type="NCBI Taxonomy" id="331111"/>
    <lineage>
        <taxon>Bacteria</taxon>
        <taxon>Pseudomonadati</taxon>
        <taxon>Pseudomonadota</taxon>
        <taxon>Gammaproteobacteria</taxon>
        <taxon>Enterobacterales</taxon>
        <taxon>Enterobacteriaceae</taxon>
        <taxon>Escherichia</taxon>
    </lineage>
</organism>
<reference key="1">
    <citation type="journal article" date="2008" name="J. Bacteriol.">
        <title>The pangenome structure of Escherichia coli: comparative genomic analysis of E. coli commensal and pathogenic isolates.</title>
        <authorList>
            <person name="Rasko D.A."/>
            <person name="Rosovitz M.J."/>
            <person name="Myers G.S.A."/>
            <person name="Mongodin E.F."/>
            <person name="Fricke W.F."/>
            <person name="Gajer P."/>
            <person name="Crabtree J."/>
            <person name="Sebaihia M."/>
            <person name="Thomson N.R."/>
            <person name="Chaudhuri R."/>
            <person name="Henderson I.R."/>
            <person name="Sperandio V."/>
            <person name="Ravel J."/>
        </authorList>
    </citation>
    <scope>NUCLEOTIDE SEQUENCE [LARGE SCALE GENOMIC DNA]</scope>
    <source>
        <strain>E24377A / ETEC</strain>
    </source>
</reference>
<dbReference type="EC" id="6.1.1.11" evidence="1"/>
<dbReference type="EMBL" id="CP000800">
    <property type="protein sequence ID" value="ABV19294.1"/>
    <property type="molecule type" value="Genomic_DNA"/>
</dbReference>
<dbReference type="RefSeq" id="WP_000886683.1">
    <property type="nucleotide sequence ID" value="NC_009801.1"/>
</dbReference>
<dbReference type="SMR" id="A7ZJW2"/>
<dbReference type="GeneID" id="93776527"/>
<dbReference type="KEGG" id="ecw:EcE24377A_0968"/>
<dbReference type="HOGENOM" id="CLU_023797_1_1_6"/>
<dbReference type="UniPathway" id="UPA00906">
    <property type="reaction ID" value="UER00895"/>
</dbReference>
<dbReference type="Proteomes" id="UP000001122">
    <property type="component" value="Chromosome"/>
</dbReference>
<dbReference type="GO" id="GO:0005737">
    <property type="term" value="C:cytoplasm"/>
    <property type="evidence" value="ECO:0007669"/>
    <property type="project" value="UniProtKB-SubCell"/>
</dbReference>
<dbReference type="GO" id="GO:0005524">
    <property type="term" value="F:ATP binding"/>
    <property type="evidence" value="ECO:0007669"/>
    <property type="project" value="UniProtKB-UniRule"/>
</dbReference>
<dbReference type="GO" id="GO:0004828">
    <property type="term" value="F:serine-tRNA ligase activity"/>
    <property type="evidence" value="ECO:0007669"/>
    <property type="project" value="UniProtKB-UniRule"/>
</dbReference>
<dbReference type="GO" id="GO:0016260">
    <property type="term" value="P:selenocysteine biosynthetic process"/>
    <property type="evidence" value="ECO:0007669"/>
    <property type="project" value="UniProtKB-UniRule"/>
</dbReference>
<dbReference type="GO" id="GO:0006434">
    <property type="term" value="P:seryl-tRNA aminoacylation"/>
    <property type="evidence" value="ECO:0007669"/>
    <property type="project" value="UniProtKB-UniRule"/>
</dbReference>
<dbReference type="CDD" id="cd00770">
    <property type="entry name" value="SerRS_core"/>
    <property type="match status" value="1"/>
</dbReference>
<dbReference type="FunFam" id="1.10.287.40:FF:000001">
    <property type="entry name" value="Serine--tRNA ligase"/>
    <property type="match status" value="1"/>
</dbReference>
<dbReference type="FunFam" id="3.30.930.10:FF:000018">
    <property type="entry name" value="Serine--tRNA ligase"/>
    <property type="match status" value="1"/>
</dbReference>
<dbReference type="Gene3D" id="3.30.930.10">
    <property type="entry name" value="Bira Bifunctional Protein, Domain 2"/>
    <property type="match status" value="1"/>
</dbReference>
<dbReference type="Gene3D" id="1.10.287.40">
    <property type="entry name" value="Serine-tRNA synthetase, tRNA binding domain"/>
    <property type="match status" value="1"/>
</dbReference>
<dbReference type="HAMAP" id="MF_00176">
    <property type="entry name" value="Ser_tRNA_synth_type1"/>
    <property type="match status" value="1"/>
</dbReference>
<dbReference type="InterPro" id="IPR002314">
    <property type="entry name" value="aa-tRNA-synt_IIb"/>
</dbReference>
<dbReference type="InterPro" id="IPR006195">
    <property type="entry name" value="aa-tRNA-synth_II"/>
</dbReference>
<dbReference type="InterPro" id="IPR045864">
    <property type="entry name" value="aa-tRNA-synth_II/BPL/LPL"/>
</dbReference>
<dbReference type="InterPro" id="IPR002317">
    <property type="entry name" value="Ser-tRNA-ligase_type_1"/>
</dbReference>
<dbReference type="InterPro" id="IPR015866">
    <property type="entry name" value="Ser-tRNA-synth_1_N"/>
</dbReference>
<dbReference type="InterPro" id="IPR042103">
    <property type="entry name" value="SerRS_1_N_sf"/>
</dbReference>
<dbReference type="InterPro" id="IPR033729">
    <property type="entry name" value="SerRS_core"/>
</dbReference>
<dbReference type="InterPro" id="IPR010978">
    <property type="entry name" value="tRNA-bd_arm"/>
</dbReference>
<dbReference type="NCBIfam" id="TIGR00414">
    <property type="entry name" value="serS"/>
    <property type="match status" value="1"/>
</dbReference>
<dbReference type="PANTHER" id="PTHR43697:SF1">
    <property type="entry name" value="SERINE--TRNA LIGASE"/>
    <property type="match status" value="1"/>
</dbReference>
<dbReference type="PANTHER" id="PTHR43697">
    <property type="entry name" value="SERYL-TRNA SYNTHETASE"/>
    <property type="match status" value="1"/>
</dbReference>
<dbReference type="Pfam" id="PF02403">
    <property type="entry name" value="Seryl_tRNA_N"/>
    <property type="match status" value="1"/>
</dbReference>
<dbReference type="Pfam" id="PF00587">
    <property type="entry name" value="tRNA-synt_2b"/>
    <property type="match status" value="1"/>
</dbReference>
<dbReference type="PIRSF" id="PIRSF001529">
    <property type="entry name" value="Ser-tRNA-synth_IIa"/>
    <property type="match status" value="1"/>
</dbReference>
<dbReference type="PRINTS" id="PR00981">
    <property type="entry name" value="TRNASYNTHSER"/>
</dbReference>
<dbReference type="SUPFAM" id="SSF55681">
    <property type="entry name" value="Class II aaRS and biotin synthetases"/>
    <property type="match status" value="1"/>
</dbReference>
<dbReference type="SUPFAM" id="SSF46589">
    <property type="entry name" value="tRNA-binding arm"/>
    <property type="match status" value="1"/>
</dbReference>
<dbReference type="PROSITE" id="PS50862">
    <property type="entry name" value="AA_TRNA_LIGASE_II"/>
    <property type="match status" value="1"/>
</dbReference>
<accession>A7ZJW2</accession>
<keyword id="KW-0030">Aminoacyl-tRNA synthetase</keyword>
<keyword id="KW-0067">ATP-binding</keyword>
<keyword id="KW-0963">Cytoplasm</keyword>
<keyword id="KW-0436">Ligase</keyword>
<keyword id="KW-0547">Nucleotide-binding</keyword>
<keyword id="KW-0648">Protein biosynthesis</keyword>
<keyword id="KW-1185">Reference proteome</keyword>
<protein>
    <recommendedName>
        <fullName evidence="1">Serine--tRNA ligase</fullName>
        <ecNumber evidence="1">6.1.1.11</ecNumber>
    </recommendedName>
    <alternativeName>
        <fullName evidence="1">Seryl-tRNA synthetase</fullName>
        <shortName evidence="1">SerRS</shortName>
    </alternativeName>
    <alternativeName>
        <fullName evidence="1">Seryl-tRNA(Ser/Sec) synthetase</fullName>
    </alternativeName>
</protein>
<proteinExistence type="inferred from homology"/>
<gene>
    <name evidence="1" type="primary">serS</name>
    <name type="ordered locus">EcE24377A_0968</name>
</gene>